<feature type="chain" id="PRO_1000051398" description="Asparagine--tRNA ligase">
    <location>
        <begin position="1"/>
        <end position="467"/>
    </location>
</feature>
<reference key="1">
    <citation type="journal article" date="2007" name="J. Bacteriol.">
        <title>Complete genome sequence of Haemophilus somnus (Histophilus somni) strain 129Pt and comparison to Haemophilus ducreyi 35000HP and Haemophilus influenzae Rd.</title>
        <authorList>
            <person name="Challacombe J.F."/>
            <person name="Duncan A.J."/>
            <person name="Brettin T.S."/>
            <person name="Bruce D."/>
            <person name="Chertkov O."/>
            <person name="Detter J.C."/>
            <person name="Han C.S."/>
            <person name="Misra M."/>
            <person name="Richardson P."/>
            <person name="Tapia R."/>
            <person name="Thayer N."/>
            <person name="Xie G."/>
            <person name="Inzana T.J."/>
        </authorList>
    </citation>
    <scope>NUCLEOTIDE SEQUENCE [LARGE SCALE GENOMIC DNA]</scope>
    <source>
        <strain>129Pt</strain>
    </source>
</reference>
<dbReference type="EC" id="6.1.1.22" evidence="1"/>
<dbReference type="EMBL" id="CP000436">
    <property type="protein sequence ID" value="ABI25031.1"/>
    <property type="molecule type" value="Genomic_DNA"/>
</dbReference>
<dbReference type="SMR" id="Q0I2M9"/>
<dbReference type="KEGG" id="hso:HS_0756"/>
<dbReference type="eggNOG" id="COG0017">
    <property type="taxonomic scope" value="Bacteria"/>
</dbReference>
<dbReference type="HOGENOM" id="CLU_004553_2_0_6"/>
<dbReference type="GO" id="GO:0005737">
    <property type="term" value="C:cytoplasm"/>
    <property type="evidence" value="ECO:0007669"/>
    <property type="project" value="UniProtKB-SubCell"/>
</dbReference>
<dbReference type="GO" id="GO:0004816">
    <property type="term" value="F:asparagine-tRNA ligase activity"/>
    <property type="evidence" value="ECO:0007669"/>
    <property type="project" value="UniProtKB-UniRule"/>
</dbReference>
<dbReference type="GO" id="GO:0005524">
    <property type="term" value="F:ATP binding"/>
    <property type="evidence" value="ECO:0007669"/>
    <property type="project" value="UniProtKB-UniRule"/>
</dbReference>
<dbReference type="GO" id="GO:0003676">
    <property type="term" value="F:nucleic acid binding"/>
    <property type="evidence" value="ECO:0007669"/>
    <property type="project" value="InterPro"/>
</dbReference>
<dbReference type="GO" id="GO:0006421">
    <property type="term" value="P:asparaginyl-tRNA aminoacylation"/>
    <property type="evidence" value="ECO:0007669"/>
    <property type="project" value="UniProtKB-UniRule"/>
</dbReference>
<dbReference type="CDD" id="cd00776">
    <property type="entry name" value="AsxRS_core"/>
    <property type="match status" value="1"/>
</dbReference>
<dbReference type="CDD" id="cd04318">
    <property type="entry name" value="EcAsnRS_like_N"/>
    <property type="match status" value="1"/>
</dbReference>
<dbReference type="FunFam" id="3.30.930.10:FF:000016">
    <property type="entry name" value="Asparagine--tRNA ligase"/>
    <property type="match status" value="1"/>
</dbReference>
<dbReference type="Gene3D" id="3.30.930.10">
    <property type="entry name" value="Bira Bifunctional Protein, Domain 2"/>
    <property type="match status" value="1"/>
</dbReference>
<dbReference type="Gene3D" id="2.40.50.140">
    <property type="entry name" value="Nucleic acid-binding proteins"/>
    <property type="match status" value="1"/>
</dbReference>
<dbReference type="HAMAP" id="MF_00534">
    <property type="entry name" value="Asn_tRNA_synth"/>
    <property type="match status" value="1"/>
</dbReference>
<dbReference type="InterPro" id="IPR004364">
    <property type="entry name" value="Aa-tRNA-synt_II"/>
</dbReference>
<dbReference type="InterPro" id="IPR006195">
    <property type="entry name" value="aa-tRNA-synth_II"/>
</dbReference>
<dbReference type="InterPro" id="IPR045864">
    <property type="entry name" value="aa-tRNA-synth_II/BPL/LPL"/>
</dbReference>
<dbReference type="InterPro" id="IPR004522">
    <property type="entry name" value="Asn-tRNA-ligase"/>
</dbReference>
<dbReference type="InterPro" id="IPR002312">
    <property type="entry name" value="Asp/Asn-tRNA-synth_IIb"/>
</dbReference>
<dbReference type="InterPro" id="IPR012340">
    <property type="entry name" value="NA-bd_OB-fold"/>
</dbReference>
<dbReference type="InterPro" id="IPR004365">
    <property type="entry name" value="NA-bd_OB_tRNA"/>
</dbReference>
<dbReference type="NCBIfam" id="TIGR00457">
    <property type="entry name" value="asnS"/>
    <property type="match status" value="1"/>
</dbReference>
<dbReference type="NCBIfam" id="NF003037">
    <property type="entry name" value="PRK03932.1"/>
    <property type="match status" value="1"/>
</dbReference>
<dbReference type="PANTHER" id="PTHR22594:SF34">
    <property type="entry name" value="ASPARAGINE--TRNA LIGASE, MITOCHONDRIAL-RELATED"/>
    <property type="match status" value="1"/>
</dbReference>
<dbReference type="PANTHER" id="PTHR22594">
    <property type="entry name" value="ASPARTYL/LYSYL-TRNA SYNTHETASE"/>
    <property type="match status" value="1"/>
</dbReference>
<dbReference type="Pfam" id="PF00152">
    <property type="entry name" value="tRNA-synt_2"/>
    <property type="match status" value="1"/>
</dbReference>
<dbReference type="Pfam" id="PF01336">
    <property type="entry name" value="tRNA_anti-codon"/>
    <property type="match status" value="1"/>
</dbReference>
<dbReference type="PRINTS" id="PR01042">
    <property type="entry name" value="TRNASYNTHASP"/>
</dbReference>
<dbReference type="SUPFAM" id="SSF55681">
    <property type="entry name" value="Class II aaRS and biotin synthetases"/>
    <property type="match status" value="1"/>
</dbReference>
<dbReference type="SUPFAM" id="SSF50249">
    <property type="entry name" value="Nucleic acid-binding proteins"/>
    <property type="match status" value="1"/>
</dbReference>
<dbReference type="PROSITE" id="PS50862">
    <property type="entry name" value="AA_TRNA_LIGASE_II"/>
    <property type="match status" value="1"/>
</dbReference>
<organism>
    <name type="scientific">Histophilus somni (strain 129Pt)</name>
    <name type="common">Haemophilus somnus</name>
    <dbReference type="NCBI Taxonomy" id="205914"/>
    <lineage>
        <taxon>Bacteria</taxon>
        <taxon>Pseudomonadati</taxon>
        <taxon>Pseudomonadota</taxon>
        <taxon>Gammaproteobacteria</taxon>
        <taxon>Pasteurellales</taxon>
        <taxon>Pasteurellaceae</taxon>
        <taxon>Histophilus</taxon>
    </lineage>
</organism>
<protein>
    <recommendedName>
        <fullName evidence="1">Asparagine--tRNA ligase</fullName>
        <ecNumber evidence="1">6.1.1.22</ecNumber>
    </recommendedName>
    <alternativeName>
        <fullName evidence="1">Asparaginyl-tRNA synthetase</fullName>
        <shortName evidence="1">AsnRS</shortName>
    </alternativeName>
</protein>
<name>SYN_HISS1</name>
<comment type="catalytic activity">
    <reaction evidence="1">
        <text>tRNA(Asn) + L-asparagine + ATP = L-asparaginyl-tRNA(Asn) + AMP + diphosphate + H(+)</text>
        <dbReference type="Rhea" id="RHEA:11180"/>
        <dbReference type="Rhea" id="RHEA-COMP:9659"/>
        <dbReference type="Rhea" id="RHEA-COMP:9674"/>
        <dbReference type="ChEBI" id="CHEBI:15378"/>
        <dbReference type="ChEBI" id="CHEBI:30616"/>
        <dbReference type="ChEBI" id="CHEBI:33019"/>
        <dbReference type="ChEBI" id="CHEBI:58048"/>
        <dbReference type="ChEBI" id="CHEBI:78442"/>
        <dbReference type="ChEBI" id="CHEBI:78515"/>
        <dbReference type="ChEBI" id="CHEBI:456215"/>
        <dbReference type="EC" id="6.1.1.22"/>
    </reaction>
</comment>
<comment type="subunit">
    <text evidence="1">Homodimer.</text>
</comment>
<comment type="subcellular location">
    <subcellularLocation>
        <location evidence="1">Cytoplasm</location>
    </subcellularLocation>
</comment>
<comment type="similarity">
    <text evidence="1">Belongs to the class-II aminoacyl-tRNA synthetase family.</text>
</comment>
<evidence type="ECO:0000255" key="1">
    <source>
        <dbReference type="HAMAP-Rule" id="MF_00534"/>
    </source>
</evidence>
<sequence>MTKIASVANILKGKITVGETVTVRGWIRTRRDSKAGLSFLAIYDGSCFDPIQAIVNNDIENYETEILRLTTGCSVVVTGKIAESPAEGQAVELQANKIEVSGWVDDPETYPMSAKRHSIEYLREVAHLRPRTNIIGAVARVRHCLAQAIHRFFHEQGFYWVATPLITASDTEGAGEMFRVSTLDLENLPRTDKGAVDFSQDFFGKESFLTVSGQLNGESYACALSKIYTFGPTFRAENSNTTRHLAEFWMVEPEIAFATLADNAKLAEDMLKYVFRAVLNEREDDLKFFEKHVDKNVITRLKDFINSDFAQIDYTDAIDILLKSGKAFEFPVSWGIDLSSEHERYLAEEYFKSPVVVKNYPKDIKAFYMRLNDDGKTVAAMDVLAPGIGEIIGGSQREERLEVLDKRIAEMGLKAEDYWWYRDLRRYGTVPHAGFGLGFERLIVYVTGVQNIRDVIPFPRTPRNANF</sequence>
<accession>Q0I2M9</accession>
<gene>
    <name evidence="1" type="primary">asnS</name>
    <name type="ordered locus">HS_0756</name>
</gene>
<keyword id="KW-0030">Aminoacyl-tRNA synthetase</keyword>
<keyword id="KW-0067">ATP-binding</keyword>
<keyword id="KW-0963">Cytoplasm</keyword>
<keyword id="KW-0436">Ligase</keyword>
<keyword id="KW-0547">Nucleotide-binding</keyword>
<keyword id="KW-0648">Protein biosynthesis</keyword>
<proteinExistence type="inferred from homology"/>